<evidence type="ECO:0000250" key="1">
    <source>
        <dbReference type="UniProtKB" id="P34420"/>
    </source>
</evidence>
<evidence type="ECO:0000256" key="2">
    <source>
        <dbReference type="SAM" id="MobiDB-lite"/>
    </source>
</evidence>
<evidence type="ECO:0000269" key="3">
    <source>
    </source>
</evidence>
<evidence type="ECO:0000269" key="4">
    <source>
    </source>
</evidence>
<evidence type="ECO:0000269" key="5">
    <source>
    </source>
</evidence>
<evidence type="ECO:0000269" key="6">
    <source>
    </source>
</evidence>
<evidence type="ECO:0000305" key="7"/>
<evidence type="ECO:0000312" key="8">
    <source>
        <dbReference type="HGNC" id="HGNC:16817"/>
    </source>
</evidence>
<evidence type="ECO:0007744" key="9">
    <source>
    </source>
</evidence>
<evidence type="ECO:0007744" key="10">
    <source>
    </source>
</evidence>
<evidence type="ECO:0007744" key="11">
    <source>
    </source>
</evidence>
<evidence type="ECO:0007744" key="12">
    <source>
    </source>
</evidence>
<protein>
    <recommendedName>
        <fullName evidence="7">Splicing factor ESS-2 homolog</fullName>
    </recommendedName>
    <alternativeName>
        <fullName>DiGeorge syndrome critical region 13</fullName>
    </alternativeName>
    <alternativeName>
        <fullName>DiGeorge syndrome critical region 14</fullName>
    </alternativeName>
    <alternativeName>
        <fullName>DiGeorge syndrome protein H</fullName>
        <shortName>DGS-H</shortName>
    </alternativeName>
    <alternativeName>
        <fullName>Protein ES2</fullName>
    </alternativeName>
</protein>
<comment type="function">
    <text evidence="1">May be involved in pre-mRNA splicing.</text>
</comment>
<comment type="subunit">
    <text evidence="3 4">Identified in the spliceosome C complex (PubMed:11991638). Interacts with FRA10AC1 (PubMed:34694367).</text>
</comment>
<comment type="interaction">
    <interactant intactId="EBI-3928124">
        <id>Q96DF8</id>
    </interactant>
    <interactant intactId="EBI-742909">
        <id>Q9H6L4</id>
        <label>ARMC7</label>
    </interactant>
    <organismsDiffer>false</organismsDiffer>
    <experiments>3</experiments>
</comment>
<comment type="interaction">
    <interactant intactId="EBI-3928124">
        <id>Q96DF8</id>
    </interactant>
    <interactant intactId="EBI-10961624">
        <id>Q2TAC2-2</id>
        <label>CCDC57</label>
    </interactant>
    <organismsDiffer>false</organismsDiffer>
    <experiments>3</experiments>
</comment>
<comment type="interaction">
    <interactant intactId="EBI-3928124">
        <id>Q96DF8</id>
    </interactant>
    <interactant intactId="EBI-12206931">
        <id>Q14129</id>
        <label>DGCR6</label>
    </interactant>
    <organismsDiffer>false</organismsDiffer>
    <experiments>3</experiments>
</comment>
<comment type="interaction">
    <interactant intactId="EBI-3928124">
        <id>Q96DF8</id>
    </interactant>
    <interactant intactId="EBI-742102">
        <id>Q8IYI6</id>
        <label>EXOC8</label>
    </interactant>
    <organismsDiffer>false</organismsDiffer>
    <experiments>3</experiments>
</comment>
<comment type="interaction">
    <interactant intactId="EBI-3928124">
        <id>Q96DF8</id>
    </interactant>
    <interactant intactId="EBI-710176">
        <id>Q70Z53</id>
        <label>FRA10AC1</label>
    </interactant>
    <organismsDiffer>false</organismsDiffer>
    <experiments>5</experiments>
</comment>
<comment type="interaction">
    <interactant intactId="EBI-3928124">
        <id>Q96DF8</id>
    </interactant>
    <interactant intactId="EBI-744302">
        <id>P14136</id>
        <label>GFAP</label>
    </interactant>
    <organismsDiffer>false</organismsDiffer>
    <experiments>3</experiments>
</comment>
<comment type="interaction">
    <interactant intactId="EBI-3928124">
        <id>Q96DF8</id>
    </interactant>
    <interactant intactId="EBI-1055254">
        <id>Q8WXH2</id>
        <label>JPH3</label>
    </interactant>
    <organismsDiffer>false</organismsDiffer>
    <experiments>3</experiments>
</comment>
<comment type="interaction">
    <interactant intactId="EBI-3928124">
        <id>Q96DF8</id>
    </interactant>
    <interactant intactId="EBI-398874">
        <id>Q9UBU9</id>
        <label>NXF1</label>
    </interactant>
    <organismsDiffer>false</organismsDiffer>
    <experiments>3</experiments>
</comment>
<comment type="interaction">
    <interactant intactId="EBI-3928124">
        <id>Q96DF8</id>
    </interactant>
    <interactant intactId="EBI-536879">
        <id>O43482</id>
        <label>OIP5</label>
    </interactant>
    <organismsDiffer>false</organismsDiffer>
    <experiments>3</experiments>
</comment>
<comment type="interaction">
    <interactant intactId="EBI-3928124">
        <id>Q96DF8</id>
    </interactant>
    <interactant intactId="EBI-395746">
        <id>Q9UMS4</id>
        <label>PRPF19</label>
    </interactant>
    <organismsDiffer>false</organismsDiffer>
    <experiments>3</experiments>
</comment>
<comment type="interaction">
    <interactant intactId="EBI-3928124">
        <id>Q96DF8</id>
    </interactant>
    <interactant intactId="EBI-347462">
        <id>P47897</id>
        <label>QARS1</label>
    </interactant>
    <organismsDiffer>false</organismsDiffer>
    <experiments>3</experiments>
</comment>
<comment type="interaction">
    <interactant intactId="EBI-3928124">
        <id>Q96DF8</id>
    </interactant>
    <interactant intactId="EBI-358489">
        <id>Q96GM5</id>
        <label>SMARCD1</label>
    </interactant>
    <organismsDiffer>false</organismsDiffer>
    <experiments>3</experiments>
</comment>
<comment type="subcellular location">
    <subcellularLocation>
        <location evidence="1">Nucleus</location>
    </subcellularLocation>
</comment>
<comment type="tissue specificity">
    <text evidence="5">Highly expressed in heart, brain and skeletal muscle. Detected at low levels in placenta.</text>
</comment>
<comment type="similarity">
    <text evidence="7">Belongs to the ESS2 family.</text>
</comment>
<organism>
    <name type="scientific">Homo sapiens</name>
    <name type="common">Human</name>
    <dbReference type="NCBI Taxonomy" id="9606"/>
    <lineage>
        <taxon>Eukaryota</taxon>
        <taxon>Metazoa</taxon>
        <taxon>Chordata</taxon>
        <taxon>Craniata</taxon>
        <taxon>Vertebrata</taxon>
        <taxon>Euteleostomi</taxon>
        <taxon>Mammalia</taxon>
        <taxon>Eutheria</taxon>
        <taxon>Euarchontoglires</taxon>
        <taxon>Primates</taxon>
        <taxon>Haplorrhini</taxon>
        <taxon>Catarrhini</taxon>
        <taxon>Hominidae</taxon>
        <taxon>Homo</taxon>
    </lineage>
</organism>
<name>ESS2_HUMAN</name>
<dbReference type="EMBL" id="L78010">
    <property type="protein sequence ID" value="AAL40039.1"/>
    <property type="molecule type" value="mRNA"/>
</dbReference>
<dbReference type="EMBL" id="CR456344">
    <property type="protein sequence ID" value="CAG30230.1"/>
    <property type="molecule type" value="mRNA"/>
</dbReference>
<dbReference type="EMBL" id="AC004471">
    <property type="status" value="NOT_ANNOTATED_CDS"/>
    <property type="molecule type" value="Genomic_DNA"/>
</dbReference>
<dbReference type="EMBL" id="BC003015">
    <property type="protein sequence ID" value="AAH03015.1"/>
    <property type="molecule type" value="mRNA"/>
</dbReference>
<dbReference type="EMBL" id="BC006542">
    <property type="protein sequence ID" value="AAH06542.1"/>
    <property type="molecule type" value="mRNA"/>
</dbReference>
<dbReference type="CCDS" id="CCDS13756.1"/>
<dbReference type="RefSeq" id="NP_073210.1">
    <property type="nucleotide sequence ID" value="NM_022719.3"/>
</dbReference>
<dbReference type="PDB" id="8C6J">
    <property type="method" value="EM"/>
    <property type="resolution" value="2.80 A"/>
    <property type="chains" value="4=1-476"/>
</dbReference>
<dbReference type="PDB" id="8RO2">
    <property type="method" value="EM"/>
    <property type="resolution" value="3.50 A"/>
    <property type="chains" value="3=1-476"/>
</dbReference>
<dbReference type="PDB" id="9FMD">
    <property type="method" value="EM"/>
    <property type="resolution" value="3.30 A"/>
    <property type="chains" value="3=1-476"/>
</dbReference>
<dbReference type="PDBsum" id="8C6J"/>
<dbReference type="PDBsum" id="8RO2"/>
<dbReference type="PDBsum" id="9FMD"/>
<dbReference type="EMDB" id="EMD-16452"/>
<dbReference type="EMDB" id="EMD-19399"/>
<dbReference type="SMR" id="Q96DF8"/>
<dbReference type="BioGRID" id="113855">
    <property type="interactions" value="158"/>
</dbReference>
<dbReference type="CORUM" id="Q96DF8"/>
<dbReference type="FunCoup" id="Q96DF8">
    <property type="interactions" value="2261"/>
</dbReference>
<dbReference type="IntAct" id="Q96DF8">
    <property type="interactions" value="116"/>
</dbReference>
<dbReference type="MINT" id="Q96DF8"/>
<dbReference type="STRING" id="9606.ENSP00000252137"/>
<dbReference type="GlyGen" id="Q96DF8">
    <property type="glycosylation" value="6 sites, 1 O-linked glycan (3 sites)"/>
</dbReference>
<dbReference type="iPTMnet" id="Q96DF8"/>
<dbReference type="MetOSite" id="Q96DF8"/>
<dbReference type="PhosphoSitePlus" id="Q96DF8"/>
<dbReference type="BioMuta" id="ESS2"/>
<dbReference type="DMDM" id="27805463"/>
<dbReference type="jPOST" id="Q96DF8"/>
<dbReference type="MassIVE" id="Q96DF8"/>
<dbReference type="PaxDb" id="9606-ENSP00000252137"/>
<dbReference type="PeptideAtlas" id="Q96DF8"/>
<dbReference type="ProteomicsDB" id="76286"/>
<dbReference type="Pumba" id="Q96DF8"/>
<dbReference type="Antibodypedia" id="245">
    <property type="antibodies" value="103 antibodies from 18 providers"/>
</dbReference>
<dbReference type="DNASU" id="8220"/>
<dbReference type="Ensembl" id="ENST00000252137.11">
    <property type="protein sequence ID" value="ENSP00000252137.6"/>
    <property type="gene ID" value="ENSG00000100056.12"/>
</dbReference>
<dbReference type="GeneID" id="8220"/>
<dbReference type="KEGG" id="hsa:8220"/>
<dbReference type="MANE-Select" id="ENST00000252137.11">
    <property type="protein sequence ID" value="ENSP00000252137.6"/>
    <property type="RefSeq nucleotide sequence ID" value="NM_022719.3"/>
    <property type="RefSeq protein sequence ID" value="NP_073210.1"/>
</dbReference>
<dbReference type="UCSC" id="uc002zou.4">
    <property type="organism name" value="human"/>
</dbReference>
<dbReference type="AGR" id="HGNC:16817"/>
<dbReference type="CTD" id="8220"/>
<dbReference type="DisGeNET" id="8220"/>
<dbReference type="GeneCards" id="ESS2"/>
<dbReference type="GeneReviews" id="ESS2"/>
<dbReference type="HGNC" id="HGNC:16817">
    <property type="gene designation" value="ESS2"/>
</dbReference>
<dbReference type="HPA" id="ENSG00000100056">
    <property type="expression patterns" value="Tissue enhanced (brain)"/>
</dbReference>
<dbReference type="MalaCards" id="ESS2"/>
<dbReference type="MIM" id="601755">
    <property type="type" value="gene"/>
</dbReference>
<dbReference type="neXtProt" id="NX_Q96DF8"/>
<dbReference type="OpenTargets" id="ENSG00000100056"/>
<dbReference type="PharmGKB" id="PA134913100"/>
<dbReference type="VEuPathDB" id="HostDB:ENSG00000100056"/>
<dbReference type="eggNOG" id="KOG2627">
    <property type="taxonomic scope" value="Eukaryota"/>
</dbReference>
<dbReference type="GeneTree" id="ENSGT00390000009387"/>
<dbReference type="HOGENOM" id="CLU_024820_0_1_1"/>
<dbReference type="InParanoid" id="Q96DF8"/>
<dbReference type="OMA" id="AQNDYLD"/>
<dbReference type="OrthoDB" id="19679at2759"/>
<dbReference type="PAN-GO" id="Q96DF8">
    <property type="GO annotations" value="1 GO annotation based on evolutionary models"/>
</dbReference>
<dbReference type="PhylomeDB" id="Q96DF8"/>
<dbReference type="TreeFam" id="TF105898"/>
<dbReference type="PathwayCommons" id="Q96DF8"/>
<dbReference type="SignaLink" id="Q96DF8"/>
<dbReference type="BioGRID-ORCS" id="8220">
    <property type="hits" value="699 hits in 1158 CRISPR screens"/>
</dbReference>
<dbReference type="ChiTaRS" id="DGCR14">
    <property type="organism name" value="human"/>
</dbReference>
<dbReference type="GeneWiki" id="DGCR14"/>
<dbReference type="GenomeRNAi" id="8220"/>
<dbReference type="Pharos" id="Q96DF8">
    <property type="development level" value="Tbio"/>
</dbReference>
<dbReference type="PRO" id="PR:Q96DF8"/>
<dbReference type="Proteomes" id="UP000005640">
    <property type="component" value="Chromosome 22"/>
</dbReference>
<dbReference type="RNAct" id="Q96DF8">
    <property type="molecule type" value="protein"/>
</dbReference>
<dbReference type="Bgee" id="ENSG00000100056">
    <property type="expression patterns" value="Expressed in sperm and 174 other cell types or tissues"/>
</dbReference>
<dbReference type="ExpressionAtlas" id="Q96DF8">
    <property type="expression patterns" value="baseline and differential"/>
</dbReference>
<dbReference type="GO" id="GO:0071013">
    <property type="term" value="C:catalytic step 2 spliceosome"/>
    <property type="evidence" value="ECO:0000314"/>
    <property type="project" value="UniProtKB"/>
</dbReference>
<dbReference type="GO" id="GO:0005634">
    <property type="term" value="C:nucleus"/>
    <property type="evidence" value="ECO:0000250"/>
    <property type="project" value="UniProtKB"/>
</dbReference>
<dbReference type="GO" id="GO:0000398">
    <property type="term" value="P:mRNA splicing, via spliceosome"/>
    <property type="evidence" value="ECO:0000315"/>
    <property type="project" value="UniProtKB"/>
</dbReference>
<dbReference type="GO" id="GO:0007399">
    <property type="term" value="P:nervous system development"/>
    <property type="evidence" value="ECO:0000250"/>
    <property type="project" value="UniProtKB"/>
</dbReference>
<dbReference type="InterPro" id="IPR019148">
    <property type="entry name" value="Nuclear_protein_DGCR14_ESS-2"/>
</dbReference>
<dbReference type="PANTHER" id="PTHR12940">
    <property type="entry name" value="ES-2 PROTEIN - RELATED"/>
    <property type="match status" value="1"/>
</dbReference>
<dbReference type="PANTHER" id="PTHR12940:SF0">
    <property type="entry name" value="SPLICING FACTOR ESS-2 HOMOLOG"/>
    <property type="match status" value="1"/>
</dbReference>
<dbReference type="Pfam" id="PF09751">
    <property type="entry name" value="Es2"/>
    <property type="match status" value="1"/>
</dbReference>
<feature type="chain" id="PRO_0000079876" description="Splicing factor ESS-2 homolog">
    <location>
        <begin position="1"/>
        <end position="476"/>
    </location>
</feature>
<feature type="region of interest" description="Disordered" evidence="2">
    <location>
        <begin position="1"/>
        <end position="36"/>
    </location>
</feature>
<feature type="region of interest" description="Disordered" evidence="2">
    <location>
        <begin position="91"/>
        <end position="148"/>
    </location>
</feature>
<feature type="region of interest" description="Disordered" evidence="2">
    <location>
        <begin position="413"/>
        <end position="465"/>
    </location>
</feature>
<feature type="compositionally biased region" description="Low complexity" evidence="2">
    <location>
        <begin position="1"/>
        <end position="18"/>
    </location>
</feature>
<feature type="compositionally biased region" description="Acidic residues" evidence="2">
    <location>
        <begin position="133"/>
        <end position="142"/>
    </location>
</feature>
<feature type="compositionally biased region" description="Low complexity" evidence="2">
    <location>
        <begin position="437"/>
        <end position="451"/>
    </location>
</feature>
<feature type="compositionally biased region" description="Polar residues" evidence="2">
    <location>
        <begin position="452"/>
        <end position="463"/>
    </location>
</feature>
<feature type="modified residue" description="N-acetylmethionine" evidence="9">
    <location>
        <position position="1"/>
    </location>
</feature>
<feature type="modified residue" description="Phosphothreonine" evidence="11">
    <location>
        <position position="3"/>
    </location>
</feature>
<feature type="modified residue" description="Phosphoserine" evidence="11">
    <location>
        <position position="292"/>
    </location>
</feature>
<feature type="modified residue" description="Phosphothreonine" evidence="11">
    <location>
        <position position="386"/>
    </location>
</feature>
<feature type="modified residue" description="Phosphoserine" evidence="10 11">
    <location>
        <position position="391"/>
    </location>
</feature>
<feature type="modified residue" description="Phosphoserine" evidence="10 11">
    <location>
        <position position="395"/>
    </location>
</feature>
<feature type="cross-link" description="Glycyl lysine isopeptide (Lys-Gly) (interchain with G-Cter in SUMO2)" evidence="12">
    <location>
        <position position="142"/>
    </location>
</feature>
<feature type="sequence variant" id="VAR_015117" description="In dbSNP:rs113904207." evidence="6">
    <original>A</original>
    <variation>V</variation>
    <location>
        <position position="31"/>
    </location>
</feature>
<feature type="sequence variant" id="VAR_015118" description="In dbSNP:rs17743887." evidence="6">
    <original>V</original>
    <variation>M</variation>
    <location>
        <position position="336"/>
    </location>
</feature>
<feature type="sequence variant" id="VAR_015119" description="In dbSNP:rs712965." evidence="6">
    <original>A</original>
    <variation>V</variation>
    <location>
        <position position="423"/>
    </location>
</feature>
<sequence>METPGASASSLLLPAASRPPRKREAGEAGAATSKQRVLDEEEYIEGLQTVIQRDFFPDVEKLQAQKEYLEAEENGDLERMRQIAIKFGSALGKMSREPPPPYVTPATFETPEVHAGTGVVGNKPRPRGRGLEDGEAGEEEEKEPLPSLDVFLSRYTSEDNASFQEIMEVAKERSRARHAWLYQAEEEFEKRQKDNLELPSAEHQAIESSQASVETWKYKAKNSLMYYPEGVPDEEQLFKKPRQVVHKNTRFLRDPFSQALSRCQLQQAAALNAQHKQGKVGPDGKELIPQESPRVGGFGFVATPSPAPGVNESPMMTWGEVENTPLRVEGSETPYVDRTPGPAFKILEPGRRERLGLKMANEAAAKNRAKKQEALRRVTENLASLTPKGLSPAMSPALQRLVSRTASKYTDRALRASYTPSPARSTHLKTPASGLQTPTSTPAPGSATRTPLTQDPASITDNLLQLPARRKASDFF</sequence>
<keyword id="KW-0002">3D-structure</keyword>
<keyword id="KW-0007">Acetylation</keyword>
<keyword id="KW-1017">Isopeptide bond</keyword>
<keyword id="KW-0507">mRNA processing</keyword>
<keyword id="KW-0508">mRNA splicing</keyword>
<keyword id="KW-0539">Nucleus</keyword>
<keyword id="KW-0597">Phosphoprotein</keyword>
<keyword id="KW-1267">Proteomics identification</keyword>
<keyword id="KW-1185">Reference proteome</keyword>
<keyword id="KW-0747">Spliceosome</keyword>
<keyword id="KW-0832">Ubl conjugation</keyword>
<proteinExistence type="evidence at protein level"/>
<accession>Q96DF8</accession>
<accession>Q49AH7</accession>
<accession>Q9BTZ4</accession>
<reference key="1">
    <citation type="journal article" date="1996" name="Genomics">
        <title>A transcription map in the CATCH22 critical region: identification, mapping, and ordering of four novel transcripts expressed in heart.</title>
        <authorList>
            <person name="Lindsay E.A."/>
            <person name="Rizzu P."/>
            <person name="Antonacci R."/>
            <person name="Jurecic V."/>
            <person name="Delmas-Mata J."/>
            <person name="Lee C.-C."/>
            <person name="Kim U.-J."/>
            <person name="Scambler P.J."/>
            <person name="Baldini A."/>
        </authorList>
    </citation>
    <scope>NUCLEOTIDE SEQUENCE [MRNA]</scope>
    <source>
        <tissue>Heart</tissue>
    </source>
</reference>
<reference key="2">
    <citation type="journal article" date="1996" name="Mamm. Genome">
        <title>Cloning and comparative mapping of a gene from the commonly deleted region of DiGeorge and Velocardiofacial syndromes conserved in C. elegans.</title>
        <authorList>
            <person name="Rizzu P."/>
            <person name="Lindsay E.A."/>
            <person name="Taylor C."/>
            <person name="O'Donnell H."/>
            <person name="Levy A."/>
            <person name="Scambler P.J."/>
            <person name="Baldini A."/>
        </authorList>
    </citation>
    <scope>NUCLEOTIDE SEQUENCE [MRNA]</scope>
    <source>
        <tissue>Heart</tissue>
    </source>
</reference>
<reference key="3">
    <citation type="journal article" date="2004" name="Genome Biol.">
        <title>A genome annotation-driven approach to cloning the human ORFeome.</title>
        <authorList>
            <person name="Collins J.E."/>
            <person name="Wright C.L."/>
            <person name="Edwards C.A."/>
            <person name="Davis M.P."/>
            <person name="Grinham J.A."/>
            <person name="Cole C.G."/>
            <person name="Goward M.E."/>
            <person name="Aguado B."/>
            <person name="Mallya M."/>
            <person name="Mokrab Y."/>
            <person name="Huckle E.J."/>
            <person name="Beare D.M."/>
            <person name="Dunham I."/>
        </authorList>
    </citation>
    <scope>NUCLEOTIDE SEQUENCE [LARGE SCALE MRNA]</scope>
</reference>
<reference key="4">
    <citation type="journal article" date="1999" name="Nature">
        <title>The DNA sequence of human chromosome 22.</title>
        <authorList>
            <person name="Dunham I."/>
            <person name="Hunt A.R."/>
            <person name="Collins J.E."/>
            <person name="Bruskiewich R."/>
            <person name="Beare D.M."/>
            <person name="Clamp M."/>
            <person name="Smink L.J."/>
            <person name="Ainscough R."/>
            <person name="Almeida J.P."/>
            <person name="Babbage A.K."/>
            <person name="Bagguley C."/>
            <person name="Bailey J."/>
            <person name="Barlow K.F."/>
            <person name="Bates K.N."/>
            <person name="Beasley O.P."/>
            <person name="Bird C.P."/>
            <person name="Blakey S.E."/>
            <person name="Bridgeman A.M."/>
            <person name="Buck D."/>
            <person name="Burgess J."/>
            <person name="Burrill W.D."/>
            <person name="Burton J."/>
            <person name="Carder C."/>
            <person name="Carter N.P."/>
            <person name="Chen Y."/>
            <person name="Clark G."/>
            <person name="Clegg S.M."/>
            <person name="Cobley V.E."/>
            <person name="Cole C.G."/>
            <person name="Collier R.E."/>
            <person name="Connor R."/>
            <person name="Conroy D."/>
            <person name="Corby N.R."/>
            <person name="Coville G.J."/>
            <person name="Cox A.V."/>
            <person name="Davis J."/>
            <person name="Dawson E."/>
            <person name="Dhami P.D."/>
            <person name="Dockree C."/>
            <person name="Dodsworth S.J."/>
            <person name="Durbin R.M."/>
            <person name="Ellington A.G."/>
            <person name="Evans K.L."/>
            <person name="Fey J.M."/>
            <person name="Fleming K."/>
            <person name="French L."/>
            <person name="Garner A.A."/>
            <person name="Gilbert J.G.R."/>
            <person name="Goward M.E."/>
            <person name="Grafham D.V."/>
            <person name="Griffiths M.N.D."/>
            <person name="Hall C."/>
            <person name="Hall R.E."/>
            <person name="Hall-Tamlyn G."/>
            <person name="Heathcott R.W."/>
            <person name="Ho S."/>
            <person name="Holmes S."/>
            <person name="Hunt S.E."/>
            <person name="Jones M.C."/>
            <person name="Kershaw J."/>
            <person name="Kimberley A.M."/>
            <person name="King A."/>
            <person name="Laird G.K."/>
            <person name="Langford C.F."/>
            <person name="Leversha M.A."/>
            <person name="Lloyd C."/>
            <person name="Lloyd D.M."/>
            <person name="Martyn I.D."/>
            <person name="Mashreghi-Mohammadi M."/>
            <person name="Matthews L.H."/>
            <person name="Mccann O.T."/>
            <person name="Mcclay J."/>
            <person name="Mclaren S."/>
            <person name="McMurray A.A."/>
            <person name="Milne S.A."/>
            <person name="Mortimore B.J."/>
            <person name="Odell C.N."/>
            <person name="Pavitt R."/>
            <person name="Pearce A.V."/>
            <person name="Pearson D."/>
            <person name="Phillimore B.J.C.T."/>
            <person name="Phillips S.H."/>
            <person name="Plumb R.W."/>
            <person name="Ramsay H."/>
            <person name="Ramsey Y."/>
            <person name="Rogers L."/>
            <person name="Ross M.T."/>
            <person name="Scott C.E."/>
            <person name="Sehra H.K."/>
            <person name="Skuce C.D."/>
            <person name="Smalley S."/>
            <person name="Smith M.L."/>
            <person name="Soderlund C."/>
            <person name="Spragon L."/>
            <person name="Steward C.A."/>
            <person name="Sulston J.E."/>
            <person name="Swann R.M."/>
            <person name="Vaudin M."/>
            <person name="Wall M."/>
            <person name="Wallis J.M."/>
            <person name="Whiteley M.N."/>
            <person name="Willey D.L."/>
            <person name="Williams L."/>
            <person name="Williams S.A."/>
            <person name="Williamson H."/>
            <person name="Wilmer T.E."/>
            <person name="Wilming L."/>
            <person name="Wright C.L."/>
            <person name="Hubbard T."/>
            <person name="Bentley D.R."/>
            <person name="Beck S."/>
            <person name="Rogers J."/>
            <person name="Shimizu N."/>
            <person name="Minoshima S."/>
            <person name="Kawasaki K."/>
            <person name="Sasaki T."/>
            <person name="Asakawa S."/>
            <person name="Kudoh J."/>
            <person name="Shintani A."/>
            <person name="Shibuya K."/>
            <person name="Yoshizaki Y."/>
            <person name="Aoki N."/>
            <person name="Mitsuyama S."/>
            <person name="Roe B.A."/>
            <person name="Chen F."/>
            <person name="Chu L."/>
            <person name="Crabtree J."/>
            <person name="Deschamps S."/>
            <person name="Do A."/>
            <person name="Do T."/>
            <person name="Dorman A."/>
            <person name="Fang F."/>
            <person name="Fu Y."/>
            <person name="Hu P."/>
            <person name="Hua A."/>
            <person name="Kenton S."/>
            <person name="Lai H."/>
            <person name="Lao H.I."/>
            <person name="Lewis J."/>
            <person name="Lewis S."/>
            <person name="Lin S.-P."/>
            <person name="Loh P."/>
            <person name="Malaj E."/>
            <person name="Nguyen T."/>
            <person name="Pan H."/>
            <person name="Phan S."/>
            <person name="Qi S."/>
            <person name="Qian Y."/>
            <person name="Ray L."/>
            <person name="Ren Q."/>
            <person name="Shaull S."/>
            <person name="Sloan D."/>
            <person name="Song L."/>
            <person name="Wang Q."/>
            <person name="Wang Y."/>
            <person name="Wang Z."/>
            <person name="White J."/>
            <person name="Willingham D."/>
            <person name="Wu H."/>
            <person name="Yao Z."/>
            <person name="Zhan M."/>
            <person name="Zhang G."/>
            <person name="Chissoe S."/>
            <person name="Murray J."/>
            <person name="Miller N."/>
            <person name="Minx P."/>
            <person name="Fulton R."/>
            <person name="Johnson D."/>
            <person name="Bemis G."/>
            <person name="Bentley D."/>
            <person name="Bradshaw H."/>
            <person name="Bourne S."/>
            <person name="Cordes M."/>
            <person name="Du Z."/>
            <person name="Fulton L."/>
            <person name="Goela D."/>
            <person name="Graves T."/>
            <person name="Hawkins J."/>
            <person name="Hinds K."/>
            <person name="Kemp K."/>
            <person name="Latreille P."/>
            <person name="Layman D."/>
            <person name="Ozersky P."/>
            <person name="Rohlfing T."/>
            <person name="Scheet P."/>
            <person name="Walker C."/>
            <person name="Wamsley A."/>
            <person name="Wohldmann P."/>
            <person name="Pepin K."/>
            <person name="Nelson J."/>
            <person name="Korf I."/>
            <person name="Bedell J.A."/>
            <person name="Hillier L.W."/>
            <person name="Mardis E."/>
            <person name="Waterston R."/>
            <person name="Wilson R."/>
            <person name="Emanuel B.S."/>
            <person name="Shaikh T."/>
            <person name="Kurahashi H."/>
            <person name="Saitta S."/>
            <person name="Budarf M.L."/>
            <person name="McDermid H.E."/>
            <person name="Johnson A."/>
            <person name="Wong A.C.C."/>
            <person name="Morrow B.E."/>
            <person name="Edelmann L."/>
            <person name="Kim U.J."/>
            <person name="Shizuya H."/>
            <person name="Simon M.I."/>
            <person name="Dumanski J.P."/>
            <person name="Peyrard M."/>
            <person name="Kedra D."/>
            <person name="Seroussi E."/>
            <person name="Fransson I."/>
            <person name="Tapia I."/>
            <person name="Bruder C.E."/>
            <person name="O'Brien K.P."/>
            <person name="Wilkinson P."/>
            <person name="Bodenteich A."/>
            <person name="Hartman K."/>
            <person name="Hu X."/>
            <person name="Khan A.S."/>
            <person name="Lane L."/>
            <person name="Tilahun Y."/>
            <person name="Wright H."/>
        </authorList>
    </citation>
    <scope>NUCLEOTIDE SEQUENCE [LARGE SCALE GENOMIC DNA]</scope>
</reference>
<reference key="5">
    <citation type="journal article" date="2004" name="Genome Res.">
        <title>The status, quality, and expansion of the NIH full-length cDNA project: the Mammalian Gene Collection (MGC).</title>
        <authorList>
            <consortium name="The MGC Project Team"/>
        </authorList>
    </citation>
    <scope>NUCLEOTIDE SEQUENCE [LARGE SCALE MRNA]</scope>
    <source>
        <tissue>Lung</tissue>
    </source>
</reference>
<reference key="6">
    <citation type="journal article" date="1996" name="Hum. Mol. Genet.">
        <title>A transcription map of the DiGeorge and velo-cardio-facial syndrome minimal critical region on 22q11.</title>
        <authorList>
            <person name="Gong W."/>
            <person name="Emanuel B.S."/>
            <person name="Collins J."/>
            <person name="Kim D.H."/>
            <person name="Wang Z."/>
            <person name="Chen F."/>
            <person name="Zhang G."/>
            <person name="Roe B."/>
            <person name="Budarf M.L."/>
        </authorList>
    </citation>
    <scope>TISSUE SPECIFICITY</scope>
</reference>
<reference key="7">
    <citation type="journal article" date="2002" name="RNA">
        <title>Purification and characterization of native spliceosomes suitable for three-dimensional structural analysis.</title>
        <authorList>
            <person name="Jurica M.S."/>
            <person name="Licklider L.J."/>
            <person name="Gygi S.P."/>
            <person name="Grigorieff N."/>
            <person name="Moore M.J."/>
        </authorList>
    </citation>
    <scope>IDENTIFICATION BY MASS SPECTROMETRY</scope>
    <scope>IDENTIFICATION IN THE SPLICEOSOMAL C COMPLEX</scope>
</reference>
<reference key="8">
    <citation type="journal article" date="2008" name="Proc. Natl. Acad. Sci. U.S.A.">
        <title>A quantitative atlas of mitotic phosphorylation.</title>
        <authorList>
            <person name="Dephoure N."/>
            <person name="Zhou C."/>
            <person name="Villen J."/>
            <person name="Beausoleil S.A."/>
            <person name="Bakalarski C.E."/>
            <person name="Elledge S.J."/>
            <person name="Gygi S.P."/>
        </authorList>
    </citation>
    <scope>IDENTIFICATION BY MASS SPECTROMETRY [LARGE SCALE ANALYSIS]</scope>
    <source>
        <tissue>Cervix carcinoma</tissue>
    </source>
</reference>
<reference key="9">
    <citation type="journal article" date="2009" name="Anal. Chem.">
        <title>Lys-N and trypsin cover complementary parts of the phosphoproteome in a refined SCX-based approach.</title>
        <authorList>
            <person name="Gauci S."/>
            <person name="Helbig A.O."/>
            <person name="Slijper M."/>
            <person name="Krijgsveld J."/>
            <person name="Heck A.J."/>
            <person name="Mohammed S."/>
        </authorList>
    </citation>
    <scope>ACETYLATION [LARGE SCALE ANALYSIS] AT MET-1</scope>
    <scope>IDENTIFICATION BY MASS SPECTROMETRY [LARGE SCALE ANALYSIS]</scope>
</reference>
<reference key="10">
    <citation type="journal article" date="2010" name="Sci. Signal.">
        <title>Quantitative phosphoproteomics reveals widespread full phosphorylation site occupancy during mitosis.</title>
        <authorList>
            <person name="Olsen J.V."/>
            <person name="Vermeulen M."/>
            <person name="Santamaria A."/>
            <person name="Kumar C."/>
            <person name="Miller M.L."/>
            <person name="Jensen L.J."/>
            <person name="Gnad F."/>
            <person name="Cox J."/>
            <person name="Jensen T.S."/>
            <person name="Nigg E.A."/>
            <person name="Brunak S."/>
            <person name="Mann M."/>
        </authorList>
    </citation>
    <scope>PHOSPHORYLATION [LARGE SCALE ANALYSIS] AT SER-391 AND SER-395</scope>
    <scope>IDENTIFICATION BY MASS SPECTROMETRY [LARGE SCALE ANALYSIS]</scope>
    <source>
        <tissue>Cervix carcinoma</tissue>
    </source>
</reference>
<reference key="11">
    <citation type="journal article" date="2013" name="J. Proteome Res.">
        <title>Toward a comprehensive characterization of a human cancer cell phosphoproteome.</title>
        <authorList>
            <person name="Zhou H."/>
            <person name="Di Palma S."/>
            <person name="Preisinger C."/>
            <person name="Peng M."/>
            <person name="Polat A.N."/>
            <person name="Heck A.J."/>
            <person name="Mohammed S."/>
        </authorList>
    </citation>
    <scope>PHOSPHORYLATION [LARGE SCALE ANALYSIS] AT THR-3; SER-292; THR-386; SER-391 AND SER-395</scope>
    <scope>IDENTIFICATION BY MASS SPECTROMETRY [LARGE SCALE ANALYSIS]</scope>
    <source>
        <tissue>Cervix carcinoma</tissue>
        <tissue>Erythroleukemia</tissue>
    </source>
</reference>
<reference key="12">
    <citation type="journal article" date="2017" name="Nat. Struct. Mol. Biol.">
        <title>Site-specific mapping of the human SUMO proteome reveals co-modification with phosphorylation.</title>
        <authorList>
            <person name="Hendriks I.A."/>
            <person name="Lyon D."/>
            <person name="Young C."/>
            <person name="Jensen L.J."/>
            <person name="Vertegaal A.C."/>
            <person name="Nielsen M.L."/>
        </authorList>
    </citation>
    <scope>SUMOYLATION [LARGE SCALE ANALYSIS] AT LYS-142</scope>
    <scope>IDENTIFICATION BY MASS SPECTROMETRY [LARGE SCALE ANALYSIS]</scope>
</reference>
<reference key="13">
    <citation type="journal article" date="2022" name="Brain">
        <title>Biallelic FRA10AC1 variants cause a neurodevelopmental disorder with growth retardation.</title>
        <authorList>
            <person name="von Elsner L."/>
            <person name="Chai G."/>
            <person name="Schneeberger P.E."/>
            <person name="Harms F.L."/>
            <person name="Casar C."/>
            <person name="Qi M."/>
            <person name="Alawi M."/>
            <person name="Abdel-Salam G.M.H."/>
            <person name="Zaki M.S."/>
            <person name="Arndt F."/>
            <person name="Yang X."/>
            <person name="Stanley V."/>
            <person name="Hempel M."/>
            <person name="Gleeson J.G."/>
            <person name="Kutsche K."/>
        </authorList>
    </citation>
    <scope>INTERACTION WITH FRA10AC1</scope>
</reference>
<reference key="14">
    <citation type="journal article" date="1997" name="Hum. Mol. Genet.">
        <title>Structural and mutational analysis of a conserved gene (DGSI) from the minimal DiGeorge syndrome critical region.</title>
        <authorList>
            <person name="Gong W."/>
            <person name="Emanuel B.S."/>
            <person name="Galili N."/>
            <person name="Kim D.H."/>
            <person name="Roe B.A."/>
            <person name="Driscoll D.A."/>
            <person name="Budarf M.L."/>
        </authorList>
    </citation>
    <scope>VARIANTS VAL-31; MET-336 AND VAL-423</scope>
</reference>
<gene>
    <name evidence="8" type="primary">ESS2</name>
    <name type="synonym">DGCR13</name>
    <name type="synonym">DGCR14</name>
    <name type="synonym">DGSH</name>
    <name type="synonym">DGSI</name>
    <name type="synonym">ES2</name>
</gene>